<keyword id="KW-0131">Cell cycle</keyword>
<keyword id="KW-0963">Cytoplasm</keyword>
<keyword id="KW-0235">DNA replication</keyword>
<keyword id="KW-0539">Nucleus</keyword>
<keyword id="KW-1185">Reference proteome</keyword>
<gene>
    <name type="primary">sld2</name>
    <name type="ORF">AFUA_3G09100</name>
</gene>
<sequence>MASVAISEIVTQSANLRAELKEWERAFAAQNGGRKAERKDIKKVPEIAAKYKEYSRLKALESSSPNPDDPKSVQLEERPKKRKRAFKDGPDAIQNSSTPRKTAKGALETPSKNRLSSSHPSQVDPYISPTALRRLFSPSTHRTPLKTAIGPTPQRDGKALGLFDLLSESGGSTATPSADRVASVRAANVRTPSKRKTMDTIMEEDEDGEEESPRLGRTPASSGKKWMLSALFATPTTLRYSAMVEDGNHITERNLGPPTDPEGTARDVAGPETPSFLRRSNSARYATSHSANPSLSPIAVRKPPQFVGKGLSALVQGLRDMEEERLEDDLDVLREIEAEQAALNVEVADSQAPAEIIGRHWKKKGQKRTTRRVRMKPVISKPASKPQSASDDENRHQAAGEEPAEPAAVPETQQPRALDAVFSEKQNEEFDDEDDQVSLHTISEPDLDSDPEYGEDIKPVTKSKSFSEKMKEAIGVAQPQPTEDPAKPSKPVIEAEETKKVRARKVNPEAHANYRSLKIRNKNSKGRGAGRFRRR</sequence>
<dbReference type="EMBL" id="AAHF01000002">
    <property type="protein sequence ID" value="EAL92670.1"/>
    <property type="molecule type" value="Genomic_DNA"/>
</dbReference>
<dbReference type="RefSeq" id="XP_754708.1">
    <property type="nucleotide sequence ID" value="XM_749615.1"/>
</dbReference>
<dbReference type="SMR" id="Q4WXD3"/>
<dbReference type="STRING" id="330879.Q4WXD3"/>
<dbReference type="EnsemblFungi" id="EAL92670">
    <property type="protein sequence ID" value="EAL92670"/>
    <property type="gene ID" value="AFUA_3G09100"/>
</dbReference>
<dbReference type="GeneID" id="3511945"/>
<dbReference type="KEGG" id="afm:AFUA_3G09100"/>
<dbReference type="VEuPathDB" id="FungiDB:Afu3g09100"/>
<dbReference type="eggNOG" id="ENOG502SCF7">
    <property type="taxonomic scope" value="Eukaryota"/>
</dbReference>
<dbReference type="HOGENOM" id="CLU_033089_0_0_1"/>
<dbReference type="InParanoid" id="Q4WXD3"/>
<dbReference type="OMA" id="AVRMPQK"/>
<dbReference type="OrthoDB" id="8775810at2759"/>
<dbReference type="Proteomes" id="UP000002530">
    <property type="component" value="Chromosome 3"/>
</dbReference>
<dbReference type="GO" id="GO:0005737">
    <property type="term" value="C:cytoplasm"/>
    <property type="evidence" value="ECO:0007669"/>
    <property type="project" value="UniProtKB-SubCell"/>
</dbReference>
<dbReference type="GO" id="GO:0031261">
    <property type="term" value="C:DNA replication preinitiation complex"/>
    <property type="evidence" value="ECO:0000318"/>
    <property type="project" value="GO_Central"/>
</dbReference>
<dbReference type="GO" id="GO:0003688">
    <property type="term" value="F:DNA replication origin binding"/>
    <property type="evidence" value="ECO:0000318"/>
    <property type="project" value="GO_Central"/>
</dbReference>
<dbReference type="GO" id="GO:0003697">
    <property type="term" value="F:single-stranded DNA binding"/>
    <property type="evidence" value="ECO:0000318"/>
    <property type="project" value="GO_Central"/>
</dbReference>
<dbReference type="GO" id="GO:0006270">
    <property type="term" value="P:DNA replication initiation"/>
    <property type="evidence" value="ECO:0000318"/>
    <property type="project" value="GO_Central"/>
</dbReference>
<dbReference type="GO" id="GO:0000727">
    <property type="term" value="P:double-strand break repair via break-induced replication"/>
    <property type="evidence" value="ECO:0000318"/>
    <property type="project" value="GO_Central"/>
</dbReference>
<dbReference type="GO" id="GO:1902977">
    <property type="term" value="P:mitotic DNA replication preinitiation complex assembly"/>
    <property type="evidence" value="ECO:0000318"/>
    <property type="project" value="GO_Central"/>
</dbReference>
<dbReference type="CDD" id="cd22289">
    <property type="entry name" value="RecQL4_SLD2_NTD"/>
    <property type="match status" value="1"/>
</dbReference>
<dbReference type="FunFam" id="1.10.10.1460:FF:000001">
    <property type="entry name" value="DNA replication regulator Sld2"/>
    <property type="match status" value="1"/>
</dbReference>
<dbReference type="Gene3D" id="1.10.10.1460">
    <property type="match status" value="1"/>
</dbReference>
<dbReference type="InterPro" id="IPR021110">
    <property type="entry name" value="DNA_rep_checkpnt_protein"/>
</dbReference>
<dbReference type="InterPro" id="IPR040203">
    <property type="entry name" value="Sld2"/>
</dbReference>
<dbReference type="PANTHER" id="PTHR28124">
    <property type="entry name" value="DNA REPLICATION REGULATOR SLD2"/>
    <property type="match status" value="1"/>
</dbReference>
<dbReference type="PANTHER" id="PTHR28124:SF1">
    <property type="entry name" value="DNA REPLICATION REGULATOR SLD2"/>
    <property type="match status" value="1"/>
</dbReference>
<dbReference type="Pfam" id="PF11719">
    <property type="entry name" value="Drc1-Sld2"/>
    <property type="match status" value="1"/>
</dbReference>
<proteinExistence type="inferred from homology"/>
<comment type="function">
    <text evidence="1">Has a role in the initiation of DNA replication. Required at S-phase checkpoint (By similarity).</text>
</comment>
<comment type="subcellular location">
    <subcellularLocation>
        <location>Cytoplasm</location>
    </subcellularLocation>
    <subcellularLocation>
        <location evidence="1">Nucleus</location>
    </subcellularLocation>
</comment>
<comment type="similarity">
    <text evidence="3">Belongs to the SLD2 family.</text>
</comment>
<name>SLD2_ASPFU</name>
<evidence type="ECO:0000250" key="1"/>
<evidence type="ECO:0000256" key="2">
    <source>
        <dbReference type="SAM" id="MobiDB-lite"/>
    </source>
</evidence>
<evidence type="ECO:0000305" key="3"/>
<protein>
    <recommendedName>
        <fullName>DNA replication regulator sld2</fullName>
    </recommendedName>
</protein>
<reference key="1">
    <citation type="journal article" date="2005" name="Nature">
        <title>Genomic sequence of the pathogenic and allergenic filamentous fungus Aspergillus fumigatus.</title>
        <authorList>
            <person name="Nierman W.C."/>
            <person name="Pain A."/>
            <person name="Anderson M.J."/>
            <person name="Wortman J.R."/>
            <person name="Kim H.S."/>
            <person name="Arroyo J."/>
            <person name="Berriman M."/>
            <person name="Abe K."/>
            <person name="Archer D.B."/>
            <person name="Bermejo C."/>
            <person name="Bennett J.W."/>
            <person name="Bowyer P."/>
            <person name="Chen D."/>
            <person name="Collins M."/>
            <person name="Coulsen R."/>
            <person name="Davies R."/>
            <person name="Dyer P.S."/>
            <person name="Farman M.L."/>
            <person name="Fedorova N."/>
            <person name="Fedorova N.D."/>
            <person name="Feldblyum T.V."/>
            <person name="Fischer R."/>
            <person name="Fosker N."/>
            <person name="Fraser A."/>
            <person name="Garcia J.L."/>
            <person name="Garcia M.J."/>
            <person name="Goble A."/>
            <person name="Goldman G.H."/>
            <person name="Gomi K."/>
            <person name="Griffith-Jones S."/>
            <person name="Gwilliam R."/>
            <person name="Haas B.J."/>
            <person name="Haas H."/>
            <person name="Harris D.E."/>
            <person name="Horiuchi H."/>
            <person name="Huang J."/>
            <person name="Humphray S."/>
            <person name="Jimenez J."/>
            <person name="Keller N."/>
            <person name="Khouri H."/>
            <person name="Kitamoto K."/>
            <person name="Kobayashi T."/>
            <person name="Konzack S."/>
            <person name="Kulkarni R."/>
            <person name="Kumagai T."/>
            <person name="Lafton A."/>
            <person name="Latge J.-P."/>
            <person name="Li W."/>
            <person name="Lord A."/>
            <person name="Lu C."/>
            <person name="Majoros W.H."/>
            <person name="May G.S."/>
            <person name="Miller B.L."/>
            <person name="Mohamoud Y."/>
            <person name="Molina M."/>
            <person name="Monod M."/>
            <person name="Mouyna I."/>
            <person name="Mulligan S."/>
            <person name="Murphy L.D."/>
            <person name="O'Neil S."/>
            <person name="Paulsen I."/>
            <person name="Penalva M.A."/>
            <person name="Pertea M."/>
            <person name="Price C."/>
            <person name="Pritchard B.L."/>
            <person name="Quail M.A."/>
            <person name="Rabbinowitsch E."/>
            <person name="Rawlins N."/>
            <person name="Rajandream M.A."/>
            <person name="Reichard U."/>
            <person name="Renauld H."/>
            <person name="Robson G.D."/>
            <person name="Rodriguez de Cordoba S."/>
            <person name="Rodriguez-Pena J.M."/>
            <person name="Ronning C.M."/>
            <person name="Rutter S."/>
            <person name="Salzberg S.L."/>
            <person name="Sanchez M."/>
            <person name="Sanchez-Ferrero J.C."/>
            <person name="Saunders D."/>
            <person name="Seeger K."/>
            <person name="Squares R."/>
            <person name="Squares S."/>
            <person name="Takeuchi M."/>
            <person name="Tekaia F."/>
            <person name="Turner G."/>
            <person name="Vazquez de Aldana C.R."/>
            <person name="Weidman J."/>
            <person name="White O."/>
            <person name="Woodward J.R."/>
            <person name="Yu J.-H."/>
            <person name="Fraser C.M."/>
            <person name="Galagan J.E."/>
            <person name="Asai K."/>
            <person name="Machida M."/>
            <person name="Hall N."/>
            <person name="Barrell B.G."/>
            <person name="Denning D.W."/>
        </authorList>
    </citation>
    <scope>NUCLEOTIDE SEQUENCE [LARGE SCALE GENOMIC DNA]</scope>
    <source>
        <strain>ATCC MYA-4609 / CBS 101355 / FGSC A1100 / Af293</strain>
    </source>
</reference>
<accession>Q4WXD3</accession>
<organism>
    <name type="scientific">Aspergillus fumigatus (strain ATCC MYA-4609 / CBS 101355 / FGSC A1100 / Af293)</name>
    <name type="common">Neosartorya fumigata</name>
    <dbReference type="NCBI Taxonomy" id="330879"/>
    <lineage>
        <taxon>Eukaryota</taxon>
        <taxon>Fungi</taxon>
        <taxon>Dikarya</taxon>
        <taxon>Ascomycota</taxon>
        <taxon>Pezizomycotina</taxon>
        <taxon>Eurotiomycetes</taxon>
        <taxon>Eurotiomycetidae</taxon>
        <taxon>Eurotiales</taxon>
        <taxon>Aspergillaceae</taxon>
        <taxon>Aspergillus</taxon>
        <taxon>Aspergillus subgen. Fumigati</taxon>
    </lineage>
</organism>
<feature type="chain" id="PRO_0000278429" description="DNA replication regulator sld2">
    <location>
        <begin position="1"/>
        <end position="535"/>
    </location>
</feature>
<feature type="region of interest" description="Disordered" evidence="2">
    <location>
        <begin position="58"/>
        <end position="156"/>
    </location>
</feature>
<feature type="region of interest" description="Disordered" evidence="2">
    <location>
        <begin position="170"/>
        <end position="221"/>
    </location>
</feature>
<feature type="region of interest" description="Disordered" evidence="2">
    <location>
        <begin position="249"/>
        <end position="302"/>
    </location>
</feature>
<feature type="region of interest" description="Disordered" evidence="2">
    <location>
        <begin position="358"/>
        <end position="535"/>
    </location>
</feature>
<feature type="compositionally biased region" description="Basic and acidic residues" evidence="2">
    <location>
        <begin position="68"/>
        <end position="79"/>
    </location>
</feature>
<feature type="compositionally biased region" description="Polar residues" evidence="2">
    <location>
        <begin position="110"/>
        <end position="121"/>
    </location>
</feature>
<feature type="compositionally biased region" description="Acidic residues" evidence="2">
    <location>
        <begin position="201"/>
        <end position="210"/>
    </location>
</feature>
<feature type="compositionally biased region" description="Polar residues" evidence="2">
    <location>
        <begin position="278"/>
        <end position="295"/>
    </location>
</feature>
<feature type="compositionally biased region" description="Basic residues" evidence="2">
    <location>
        <begin position="359"/>
        <end position="375"/>
    </location>
</feature>
<feature type="compositionally biased region" description="Low complexity" evidence="2">
    <location>
        <begin position="405"/>
        <end position="415"/>
    </location>
</feature>
<feature type="compositionally biased region" description="Acidic residues" evidence="2">
    <location>
        <begin position="445"/>
        <end position="454"/>
    </location>
</feature>
<feature type="compositionally biased region" description="Basic and acidic residues" evidence="2">
    <location>
        <begin position="455"/>
        <end position="472"/>
    </location>
</feature>
<feature type="compositionally biased region" description="Basic residues" evidence="2">
    <location>
        <begin position="517"/>
        <end position="535"/>
    </location>
</feature>